<comment type="function">
    <text evidence="1">May be required for ribosome biogenesis.</text>
</comment>
<comment type="subcellular location">
    <subcellularLocation>
        <location evidence="1">Nucleus</location>
        <location evidence="1">Nucleolus</location>
    </subcellularLocation>
</comment>
<sequence length="330" mass="38759">MKAVKAPVEEMDQAECEVKEEKSASGPCFPPTFSVSEIKNKQRRHTMFLKLKEEKRKKRMELKKKKKKERKALDDKAPPKEVPKTIENQRIYDETTVNPEDEEVAFDEGTDEFSAYFNRLTNPKVLITTSDRPRGRTVRFCDQLATVIPHAYVYYRRGLALKKVIPQCISRGFTYLMVINEDRKVPNGMVLCHLPDGPTAHFKVSSVRLRKEMKRRGKNPTEHSPEVILNNFTTRLGHSIGRLFAALFPHDPQFVGRQVATFHNQRDFIFFRFHRYIFKNEKKVGIQELGPRFTLKLRSLQKGTFDSKFGEYEWVHKRHEMDSSRRKFHL</sequence>
<reference key="1">
    <citation type="submission" date="2004-06" db="EMBL/GenBank/DDBJ databases">
        <authorList>
            <consortium name="NIH - Zebrafish Gene Collection (ZGC) project"/>
        </authorList>
    </citation>
    <scope>NUCLEOTIDE SEQUENCE [LARGE SCALE MRNA]</scope>
    <source>
        <tissue>Embryo</tissue>
    </source>
</reference>
<dbReference type="EMBL" id="BC071307">
    <property type="protein sequence ID" value="AAH71307.1"/>
    <property type="molecule type" value="mRNA"/>
</dbReference>
<dbReference type="SMR" id="Q6IQU6"/>
<dbReference type="FunCoup" id="Q6IQU6">
    <property type="interactions" value="2246"/>
</dbReference>
<dbReference type="STRING" id="7955.ENSDARP00000117162"/>
<dbReference type="PaxDb" id="7955-ENSDARP00000117162"/>
<dbReference type="AGR" id="ZFIN:ZDB-GENE-040625-177"/>
<dbReference type="ZFIN" id="ZDB-GENE-040625-177">
    <property type="gene designation" value="rpf1"/>
</dbReference>
<dbReference type="eggNOG" id="KOG2780">
    <property type="taxonomic scope" value="Eukaryota"/>
</dbReference>
<dbReference type="InParanoid" id="Q6IQU6"/>
<dbReference type="PhylomeDB" id="Q6IQU6"/>
<dbReference type="PRO" id="PR:Q6IQU6"/>
<dbReference type="Proteomes" id="UP000000437">
    <property type="component" value="Unplaced"/>
</dbReference>
<dbReference type="GO" id="GO:0005730">
    <property type="term" value="C:nucleolus"/>
    <property type="evidence" value="ECO:0000250"/>
    <property type="project" value="UniProtKB"/>
</dbReference>
<dbReference type="GO" id="GO:0030687">
    <property type="term" value="C:preribosome, large subunit precursor"/>
    <property type="evidence" value="ECO:0000318"/>
    <property type="project" value="GO_Central"/>
</dbReference>
<dbReference type="GO" id="GO:0003723">
    <property type="term" value="F:RNA binding"/>
    <property type="evidence" value="ECO:0000250"/>
    <property type="project" value="UniProtKB"/>
</dbReference>
<dbReference type="GO" id="GO:0042134">
    <property type="term" value="F:rRNA primary transcript binding"/>
    <property type="evidence" value="ECO:0007669"/>
    <property type="project" value="InterPro"/>
</dbReference>
<dbReference type="GO" id="GO:0000460">
    <property type="term" value="P:maturation of 5.8S rRNA"/>
    <property type="evidence" value="ECO:0000318"/>
    <property type="project" value="GO_Central"/>
</dbReference>
<dbReference type="GO" id="GO:0000470">
    <property type="term" value="P:maturation of LSU-rRNA"/>
    <property type="evidence" value="ECO:0000318"/>
    <property type="project" value="GO_Central"/>
</dbReference>
<dbReference type="FunFam" id="3.40.50.10480:FF:000002">
    <property type="entry name" value="Ribosome production factor 1"/>
    <property type="match status" value="1"/>
</dbReference>
<dbReference type="Gene3D" id="3.40.50.10480">
    <property type="entry name" value="Probable brix-domain ribosomal biogenesis protein"/>
    <property type="match status" value="1"/>
</dbReference>
<dbReference type="InterPro" id="IPR007109">
    <property type="entry name" value="Brix"/>
</dbReference>
<dbReference type="InterPro" id="IPR044281">
    <property type="entry name" value="IMP4/RPF1"/>
</dbReference>
<dbReference type="PANTHER" id="PTHR22734:SF3">
    <property type="entry name" value="RIBOSOME PRODUCTION FACTOR 1"/>
    <property type="match status" value="1"/>
</dbReference>
<dbReference type="PANTHER" id="PTHR22734">
    <property type="entry name" value="U3 SMALL NUCLEOLAR RIBONUCLEOPROTEIN PROTEIN IMP4"/>
    <property type="match status" value="1"/>
</dbReference>
<dbReference type="Pfam" id="PF04427">
    <property type="entry name" value="Brix"/>
    <property type="match status" value="1"/>
</dbReference>
<dbReference type="SMART" id="SM00879">
    <property type="entry name" value="Brix"/>
    <property type="match status" value="1"/>
</dbReference>
<dbReference type="SUPFAM" id="SSF52954">
    <property type="entry name" value="Class II aaRS ABD-related"/>
    <property type="match status" value="1"/>
</dbReference>
<dbReference type="PROSITE" id="PS50833">
    <property type="entry name" value="BRIX"/>
    <property type="match status" value="1"/>
</dbReference>
<evidence type="ECO:0000250" key="1"/>
<evidence type="ECO:0000255" key="2">
    <source>
        <dbReference type="PROSITE-ProRule" id="PRU00034"/>
    </source>
</evidence>
<evidence type="ECO:0000256" key="3">
    <source>
        <dbReference type="SAM" id="MobiDB-lite"/>
    </source>
</evidence>
<accession>Q6IQU6</accession>
<name>RPF1_DANRE</name>
<gene>
    <name type="primary">rpf1</name>
    <name type="synonym">bxdc5</name>
    <name type="ORF">zgc:86604</name>
</gene>
<proteinExistence type="evidence at transcript level"/>
<protein>
    <recommendedName>
        <fullName>Ribosome production factor 1</fullName>
    </recommendedName>
    <alternativeName>
        <fullName>Brix domain-containing protein 5</fullName>
    </alternativeName>
    <alternativeName>
        <fullName>Ribosome biogenesis protein RPF1</fullName>
    </alternativeName>
</protein>
<feature type="chain" id="PRO_0000120252" description="Ribosome production factor 1">
    <location>
        <begin position="1"/>
        <end position="330"/>
    </location>
</feature>
<feature type="domain" description="Brix" evidence="2">
    <location>
        <begin position="123"/>
        <end position="306"/>
    </location>
</feature>
<feature type="region of interest" description="Disordered" evidence="3">
    <location>
        <begin position="1"/>
        <end position="32"/>
    </location>
</feature>
<feature type="region of interest" description="Disordered" evidence="3">
    <location>
        <begin position="53"/>
        <end position="83"/>
    </location>
</feature>
<feature type="region of interest" description="RNA-binding" evidence="1">
    <location>
        <begin position="284"/>
        <end position="301"/>
    </location>
</feature>
<feature type="compositionally biased region" description="Basic residues" evidence="3">
    <location>
        <begin position="55"/>
        <end position="70"/>
    </location>
</feature>
<feature type="compositionally biased region" description="Basic and acidic residues" evidence="3">
    <location>
        <begin position="71"/>
        <end position="83"/>
    </location>
</feature>
<keyword id="KW-0539">Nucleus</keyword>
<keyword id="KW-1185">Reference proteome</keyword>
<keyword id="KW-0690">Ribosome biogenesis</keyword>
<keyword id="KW-0694">RNA-binding</keyword>
<keyword id="KW-0698">rRNA processing</keyword>
<keyword id="KW-0699">rRNA-binding</keyword>
<organism>
    <name type="scientific">Danio rerio</name>
    <name type="common">Zebrafish</name>
    <name type="synonym">Brachydanio rerio</name>
    <dbReference type="NCBI Taxonomy" id="7955"/>
    <lineage>
        <taxon>Eukaryota</taxon>
        <taxon>Metazoa</taxon>
        <taxon>Chordata</taxon>
        <taxon>Craniata</taxon>
        <taxon>Vertebrata</taxon>
        <taxon>Euteleostomi</taxon>
        <taxon>Actinopterygii</taxon>
        <taxon>Neopterygii</taxon>
        <taxon>Teleostei</taxon>
        <taxon>Ostariophysi</taxon>
        <taxon>Cypriniformes</taxon>
        <taxon>Danionidae</taxon>
        <taxon>Danioninae</taxon>
        <taxon>Danio</taxon>
    </lineage>
</organism>